<protein>
    <recommendedName>
        <fullName evidence="1">Large ribosomal subunit protein bL31</fullName>
    </recommendedName>
    <alternativeName>
        <fullName evidence="2">50S ribosomal protein L31</fullName>
    </alternativeName>
</protein>
<comment type="function">
    <text evidence="1">Binds the 23S rRNA.</text>
</comment>
<comment type="cofactor">
    <cofactor evidence="1">
        <name>Zn(2+)</name>
        <dbReference type="ChEBI" id="CHEBI:29105"/>
    </cofactor>
    <text evidence="1">Binds 1 zinc ion per subunit.</text>
</comment>
<comment type="subunit">
    <text evidence="1">Part of the 50S ribosomal subunit.</text>
</comment>
<comment type="similarity">
    <text evidence="1">Belongs to the bacterial ribosomal protein bL31 family. Type A subfamily.</text>
</comment>
<sequence length="65" mass="7355">MKQDIHPKYNVVTVSCACGNEFESGSVKQALKVEICSNCHPFFTGKQKFVDAGGRVDRFKRKYNL</sequence>
<organism>
    <name type="scientific">Brevibacillus brevis (strain 47 / JCM 6285 / NBRC 100599)</name>
    <dbReference type="NCBI Taxonomy" id="358681"/>
    <lineage>
        <taxon>Bacteria</taxon>
        <taxon>Bacillati</taxon>
        <taxon>Bacillota</taxon>
        <taxon>Bacilli</taxon>
        <taxon>Bacillales</taxon>
        <taxon>Paenibacillaceae</taxon>
        <taxon>Brevibacillus</taxon>
    </lineage>
</organism>
<dbReference type="EMBL" id="AP008955">
    <property type="protein sequence ID" value="BAH46459.1"/>
    <property type="molecule type" value="Genomic_DNA"/>
</dbReference>
<dbReference type="RefSeq" id="WP_015893651.1">
    <property type="nucleotide sequence ID" value="NC_012491.1"/>
</dbReference>
<dbReference type="SMR" id="C0Z832"/>
<dbReference type="STRING" id="358681.BBR47_54820"/>
<dbReference type="KEGG" id="bbe:BBR47_54820"/>
<dbReference type="eggNOG" id="COG0254">
    <property type="taxonomic scope" value="Bacteria"/>
</dbReference>
<dbReference type="HOGENOM" id="CLU_114306_4_3_9"/>
<dbReference type="Proteomes" id="UP000001877">
    <property type="component" value="Chromosome"/>
</dbReference>
<dbReference type="GO" id="GO:1990904">
    <property type="term" value="C:ribonucleoprotein complex"/>
    <property type="evidence" value="ECO:0007669"/>
    <property type="project" value="UniProtKB-KW"/>
</dbReference>
<dbReference type="GO" id="GO:0005840">
    <property type="term" value="C:ribosome"/>
    <property type="evidence" value="ECO:0007669"/>
    <property type="project" value="UniProtKB-KW"/>
</dbReference>
<dbReference type="GO" id="GO:0046872">
    <property type="term" value="F:metal ion binding"/>
    <property type="evidence" value="ECO:0007669"/>
    <property type="project" value="UniProtKB-KW"/>
</dbReference>
<dbReference type="GO" id="GO:0019843">
    <property type="term" value="F:rRNA binding"/>
    <property type="evidence" value="ECO:0007669"/>
    <property type="project" value="UniProtKB-KW"/>
</dbReference>
<dbReference type="GO" id="GO:0003735">
    <property type="term" value="F:structural constituent of ribosome"/>
    <property type="evidence" value="ECO:0007669"/>
    <property type="project" value="InterPro"/>
</dbReference>
<dbReference type="GO" id="GO:0006412">
    <property type="term" value="P:translation"/>
    <property type="evidence" value="ECO:0007669"/>
    <property type="project" value="UniProtKB-UniRule"/>
</dbReference>
<dbReference type="Gene3D" id="4.10.830.30">
    <property type="entry name" value="Ribosomal protein L31"/>
    <property type="match status" value="1"/>
</dbReference>
<dbReference type="HAMAP" id="MF_00501">
    <property type="entry name" value="Ribosomal_bL31_1"/>
    <property type="match status" value="1"/>
</dbReference>
<dbReference type="InterPro" id="IPR034704">
    <property type="entry name" value="Ribosomal_bL28/bL31-like_sf"/>
</dbReference>
<dbReference type="InterPro" id="IPR002150">
    <property type="entry name" value="Ribosomal_bL31"/>
</dbReference>
<dbReference type="InterPro" id="IPR027491">
    <property type="entry name" value="Ribosomal_bL31_A"/>
</dbReference>
<dbReference type="InterPro" id="IPR042105">
    <property type="entry name" value="Ribosomal_bL31_sf"/>
</dbReference>
<dbReference type="NCBIfam" id="TIGR00105">
    <property type="entry name" value="L31"/>
    <property type="match status" value="1"/>
</dbReference>
<dbReference type="NCBIfam" id="NF000612">
    <property type="entry name" value="PRK00019.1"/>
    <property type="match status" value="1"/>
</dbReference>
<dbReference type="NCBIfam" id="NF001809">
    <property type="entry name" value="PRK00528.1"/>
    <property type="match status" value="1"/>
</dbReference>
<dbReference type="PANTHER" id="PTHR33280">
    <property type="entry name" value="50S RIBOSOMAL PROTEIN L31, CHLOROPLASTIC"/>
    <property type="match status" value="1"/>
</dbReference>
<dbReference type="PANTHER" id="PTHR33280:SF1">
    <property type="entry name" value="LARGE RIBOSOMAL SUBUNIT PROTEIN BL31C"/>
    <property type="match status" value="1"/>
</dbReference>
<dbReference type="Pfam" id="PF01197">
    <property type="entry name" value="Ribosomal_L31"/>
    <property type="match status" value="1"/>
</dbReference>
<dbReference type="PRINTS" id="PR01249">
    <property type="entry name" value="RIBOSOMALL31"/>
</dbReference>
<dbReference type="SUPFAM" id="SSF143800">
    <property type="entry name" value="L28p-like"/>
    <property type="match status" value="1"/>
</dbReference>
<dbReference type="PROSITE" id="PS01143">
    <property type="entry name" value="RIBOSOMAL_L31"/>
    <property type="match status" value="1"/>
</dbReference>
<evidence type="ECO:0000255" key="1">
    <source>
        <dbReference type="HAMAP-Rule" id="MF_00501"/>
    </source>
</evidence>
<evidence type="ECO:0000305" key="2"/>
<keyword id="KW-0479">Metal-binding</keyword>
<keyword id="KW-1185">Reference proteome</keyword>
<keyword id="KW-0687">Ribonucleoprotein</keyword>
<keyword id="KW-0689">Ribosomal protein</keyword>
<keyword id="KW-0694">RNA-binding</keyword>
<keyword id="KW-0699">rRNA-binding</keyword>
<keyword id="KW-0862">Zinc</keyword>
<gene>
    <name evidence="1" type="primary">rpmE</name>
    <name type="ordered locus">BBR47_54820</name>
</gene>
<accession>C0Z832</accession>
<reference key="1">
    <citation type="submission" date="2005-03" db="EMBL/GenBank/DDBJ databases">
        <title>Brevibacillus brevis strain 47, complete genome.</title>
        <authorList>
            <person name="Hosoyama A."/>
            <person name="Yamada R."/>
            <person name="Hongo Y."/>
            <person name="Terui Y."/>
            <person name="Ankai A."/>
            <person name="Masuyama W."/>
            <person name="Sekiguchi M."/>
            <person name="Takeda T."/>
            <person name="Asano K."/>
            <person name="Ohji S."/>
            <person name="Ichikawa N."/>
            <person name="Narita S."/>
            <person name="Aoki N."/>
            <person name="Miura H."/>
            <person name="Matsushita S."/>
            <person name="Sekigawa T."/>
            <person name="Yamagata H."/>
            <person name="Yoshikawa H."/>
            <person name="Udaka S."/>
            <person name="Tanikawa S."/>
            <person name="Fujita N."/>
        </authorList>
    </citation>
    <scope>NUCLEOTIDE SEQUENCE [LARGE SCALE GENOMIC DNA]</scope>
    <source>
        <strain>47 / JCM 6285 / NBRC 100599</strain>
    </source>
</reference>
<proteinExistence type="inferred from homology"/>
<name>RL31_BREBN</name>
<feature type="chain" id="PRO_1000176949" description="Large ribosomal subunit protein bL31">
    <location>
        <begin position="1"/>
        <end position="65"/>
    </location>
</feature>
<feature type="binding site" evidence="1">
    <location>
        <position position="16"/>
    </location>
    <ligand>
        <name>Zn(2+)</name>
        <dbReference type="ChEBI" id="CHEBI:29105"/>
    </ligand>
</feature>
<feature type="binding site" evidence="1">
    <location>
        <position position="18"/>
    </location>
    <ligand>
        <name>Zn(2+)</name>
        <dbReference type="ChEBI" id="CHEBI:29105"/>
    </ligand>
</feature>
<feature type="binding site" evidence="1">
    <location>
        <position position="36"/>
    </location>
    <ligand>
        <name>Zn(2+)</name>
        <dbReference type="ChEBI" id="CHEBI:29105"/>
    </ligand>
</feature>
<feature type="binding site" evidence="1">
    <location>
        <position position="39"/>
    </location>
    <ligand>
        <name>Zn(2+)</name>
        <dbReference type="ChEBI" id="CHEBI:29105"/>
    </ligand>
</feature>